<evidence type="ECO:0000255" key="1">
    <source>
        <dbReference type="HAMAP-Rule" id="MF_00634"/>
    </source>
</evidence>
<gene>
    <name type="ordered locus">RL4503</name>
</gene>
<name>Y4503_RHIJ3</name>
<proteinExistence type="inferred from homology"/>
<organism>
    <name type="scientific">Rhizobium johnstonii (strain DSM 114642 / LMG 32736 / 3841)</name>
    <name type="common">Rhizobium leguminosarum bv. viciae</name>
    <dbReference type="NCBI Taxonomy" id="216596"/>
    <lineage>
        <taxon>Bacteria</taxon>
        <taxon>Pseudomonadati</taxon>
        <taxon>Pseudomonadota</taxon>
        <taxon>Alphaproteobacteria</taxon>
        <taxon>Hyphomicrobiales</taxon>
        <taxon>Rhizobiaceae</taxon>
        <taxon>Rhizobium/Agrobacterium group</taxon>
        <taxon>Rhizobium</taxon>
        <taxon>Rhizobium johnstonii</taxon>
    </lineage>
</organism>
<accession>Q1MAP9</accession>
<dbReference type="EMBL" id="AM236080">
    <property type="protein sequence ID" value="CAK09988.1"/>
    <property type="molecule type" value="Genomic_DNA"/>
</dbReference>
<dbReference type="RefSeq" id="WP_011653867.1">
    <property type="nucleotide sequence ID" value="NC_008380.1"/>
</dbReference>
<dbReference type="SMR" id="Q1MAP9"/>
<dbReference type="EnsemblBacteria" id="CAK09988">
    <property type="protein sequence ID" value="CAK09988"/>
    <property type="gene ID" value="RL4503"/>
</dbReference>
<dbReference type="KEGG" id="rle:RL4503"/>
<dbReference type="eggNOG" id="COG1872">
    <property type="taxonomic scope" value="Bacteria"/>
</dbReference>
<dbReference type="HOGENOM" id="CLU_130694_3_0_5"/>
<dbReference type="Proteomes" id="UP000006575">
    <property type="component" value="Chromosome"/>
</dbReference>
<dbReference type="Gene3D" id="3.30.1200.10">
    <property type="entry name" value="YggU-like"/>
    <property type="match status" value="1"/>
</dbReference>
<dbReference type="HAMAP" id="MF_00634">
    <property type="entry name" value="UPF0235"/>
    <property type="match status" value="1"/>
</dbReference>
<dbReference type="InterPro" id="IPR003746">
    <property type="entry name" value="DUF167"/>
</dbReference>
<dbReference type="InterPro" id="IPR036591">
    <property type="entry name" value="YggU-like_sf"/>
</dbReference>
<dbReference type="NCBIfam" id="TIGR00251">
    <property type="entry name" value="DUF167 family protein"/>
    <property type="match status" value="1"/>
</dbReference>
<dbReference type="NCBIfam" id="NF002348">
    <property type="entry name" value="PRK01310.1"/>
    <property type="match status" value="1"/>
</dbReference>
<dbReference type="Pfam" id="PF02594">
    <property type="entry name" value="DUF167"/>
    <property type="match status" value="1"/>
</dbReference>
<dbReference type="SMART" id="SM01152">
    <property type="entry name" value="DUF167"/>
    <property type="match status" value="1"/>
</dbReference>
<dbReference type="SUPFAM" id="SSF69786">
    <property type="entry name" value="YggU-like"/>
    <property type="match status" value="1"/>
</dbReference>
<comment type="similarity">
    <text evidence="1">Belongs to the UPF0235 family.</text>
</comment>
<reference key="1">
    <citation type="journal article" date="2006" name="Genome Biol.">
        <title>The genome of Rhizobium leguminosarum has recognizable core and accessory components.</title>
        <authorList>
            <person name="Young J.P.W."/>
            <person name="Crossman L.C."/>
            <person name="Johnston A.W.B."/>
            <person name="Thomson N.R."/>
            <person name="Ghazoui Z.F."/>
            <person name="Hull K.H."/>
            <person name="Wexler M."/>
            <person name="Curson A.R.J."/>
            <person name="Todd J.D."/>
            <person name="Poole P.S."/>
            <person name="Mauchline T.H."/>
            <person name="East A.K."/>
            <person name="Quail M.A."/>
            <person name="Churcher C."/>
            <person name="Arrowsmith C."/>
            <person name="Cherevach I."/>
            <person name="Chillingworth T."/>
            <person name="Clarke K."/>
            <person name="Cronin A."/>
            <person name="Davis P."/>
            <person name="Fraser A."/>
            <person name="Hance Z."/>
            <person name="Hauser H."/>
            <person name="Jagels K."/>
            <person name="Moule S."/>
            <person name="Mungall K."/>
            <person name="Norbertczak H."/>
            <person name="Rabbinowitsch E."/>
            <person name="Sanders M."/>
            <person name="Simmonds M."/>
            <person name="Whitehead S."/>
            <person name="Parkhill J."/>
        </authorList>
    </citation>
    <scope>NUCLEOTIDE SEQUENCE [LARGE SCALE GENOMIC DNA]</scope>
    <source>
        <strain>DSM 114642 / LMG 32736 / 3841</strain>
    </source>
</reference>
<sequence length="103" mass="11154">MSSPWSLFDDHLRLAVRLTPNGGRDALDGIEADGEGEAFLKARVTAVPEKGKANKALMLLIAKSLRIPKSSVSLVSGETARKKILRIDGDPEDLVKKLEIFLG</sequence>
<protein>
    <recommendedName>
        <fullName evidence="1">UPF0235 protein RL4503</fullName>
    </recommendedName>
</protein>
<feature type="chain" id="PRO_1000056780" description="UPF0235 protein RL4503">
    <location>
        <begin position="1"/>
        <end position="103"/>
    </location>
</feature>